<gene>
    <name type="primary">ATG13</name>
    <name type="ordered locus">YALI0F03432g</name>
</gene>
<feature type="chain" id="PRO_0000157971" description="Autophagy-related protein 13">
    <location>
        <begin position="1"/>
        <end position="715"/>
    </location>
</feature>
<feature type="region of interest" description="Disordered" evidence="3">
    <location>
        <begin position="329"/>
        <end position="510"/>
    </location>
</feature>
<feature type="compositionally biased region" description="Gly residues" evidence="3">
    <location>
        <begin position="340"/>
        <end position="381"/>
    </location>
</feature>
<feature type="compositionally biased region" description="Low complexity" evidence="3">
    <location>
        <begin position="382"/>
        <end position="392"/>
    </location>
</feature>
<feature type="compositionally biased region" description="Low complexity" evidence="3">
    <location>
        <begin position="414"/>
        <end position="432"/>
    </location>
</feature>
<feature type="compositionally biased region" description="Low complexity" evidence="3">
    <location>
        <begin position="445"/>
        <end position="455"/>
    </location>
</feature>
<feature type="compositionally biased region" description="Polar residues" evidence="3">
    <location>
        <begin position="458"/>
        <end position="476"/>
    </location>
</feature>
<feature type="compositionally biased region" description="Low complexity" evidence="3">
    <location>
        <begin position="486"/>
        <end position="500"/>
    </location>
</feature>
<organism>
    <name type="scientific">Yarrowia lipolytica (strain CLIB 122 / E 150)</name>
    <name type="common">Yeast</name>
    <name type="synonym">Candida lipolytica</name>
    <dbReference type="NCBI Taxonomy" id="284591"/>
    <lineage>
        <taxon>Eukaryota</taxon>
        <taxon>Fungi</taxon>
        <taxon>Dikarya</taxon>
        <taxon>Ascomycota</taxon>
        <taxon>Saccharomycotina</taxon>
        <taxon>Dipodascomycetes</taxon>
        <taxon>Dipodascales</taxon>
        <taxon>Dipodascales incertae sedis</taxon>
        <taxon>Yarrowia</taxon>
    </lineage>
</organism>
<accession>Q6C315</accession>
<proteinExistence type="inferred from homology"/>
<sequence length="715" mass="76855">MSFQGTSSGSSHSSKSKLNQVVQNFFSKATQVVVQARLNPRLREQRQSGDKHKLNKWFNLETDELEAYREDLKLWRTIDIYNMDKMPPVVVETYLDMRHLSPNQTLVLEDAFGKRWNASFGGRKTEVVLERWVIEIQRPDPQAGGATTSPASSTELPMAYKKCILLFRSLYTYCRLLPAWTLQKRLSKSKLSTSPLRIGCRVLNGSQPISSRGRVGLSKLIAGSSESQHLQTFSFDPVEIPSGVFKISVSYRVNCNFAVDDSEAMLSSQFLRIDEEKPVVPPSPPVKHPSMAAPNLHYITGLPRRHSHSQGVGVSGAAIVPTSVSSVTDYMERRRSSGASGVGATGGGLAGTSGGSGGVSGGVSGGSGGSGGSGGWGGEEGSPGPAATSASPSTPPFARVPSSSSLAALRIPRRTISNSSTSSTNNARVVTTPGYTPSAYEQAISSSGGSSRSGSVPKYSSSFGTRQWNRSGSISSTRRRNSMLVGSAESAMSSGSSLMEPGSGFIDIEDPTDVSDFVKMVDSIKPGSPYSLPSPRKGSDPLARFQQLKGSHAGIADSITSSIYHHQPSPPYVRSKLSGEANLEAISSLPRPVTVPPSPRKLETQMQPISLADQHTSEYHQLQQRTSARPQAHSYSERDQLDNSHYKALERYDLVGASPSVVGSRYYTEHDRGRGEKRYSVAPLPGLEFDEDDDLLFAMSDMAMGDSASGGNVRT</sequence>
<dbReference type="EMBL" id="CR382132">
    <property type="protein sequence ID" value="CAG77754.1"/>
    <property type="molecule type" value="Genomic_DNA"/>
</dbReference>
<dbReference type="RefSeq" id="XP_504947.1">
    <property type="nucleotide sequence ID" value="XM_504947.1"/>
</dbReference>
<dbReference type="SMR" id="Q6C315"/>
<dbReference type="FunCoup" id="Q6C315">
    <property type="interactions" value="38"/>
</dbReference>
<dbReference type="STRING" id="284591.Q6C315"/>
<dbReference type="EnsemblFungi" id="CAG77754">
    <property type="protein sequence ID" value="CAG77754"/>
    <property type="gene ID" value="YALI0_F03432g"/>
</dbReference>
<dbReference type="KEGG" id="yli:2907738"/>
<dbReference type="VEuPathDB" id="FungiDB:YALI0_F03432g"/>
<dbReference type="HOGENOM" id="CLU_007151_0_0_1"/>
<dbReference type="InParanoid" id="Q6C315"/>
<dbReference type="OMA" id="TELPMAY"/>
<dbReference type="OrthoDB" id="119639at4891"/>
<dbReference type="Proteomes" id="UP000001300">
    <property type="component" value="Chromosome F"/>
</dbReference>
<dbReference type="GO" id="GO:1990316">
    <property type="term" value="C:Atg1/ULK1 kinase complex"/>
    <property type="evidence" value="ECO:0000318"/>
    <property type="project" value="GO_Central"/>
</dbReference>
<dbReference type="GO" id="GO:0005776">
    <property type="term" value="C:autophagosome"/>
    <property type="evidence" value="ECO:0000318"/>
    <property type="project" value="GO_Central"/>
</dbReference>
<dbReference type="GO" id="GO:0005829">
    <property type="term" value="C:cytosol"/>
    <property type="evidence" value="ECO:0000318"/>
    <property type="project" value="GO_Central"/>
</dbReference>
<dbReference type="GO" id="GO:0000407">
    <property type="term" value="C:phagophore assembly site"/>
    <property type="evidence" value="ECO:0000318"/>
    <property type="project" value="GO_Central"/>
</dbReference>
<dbReference type="GO" id="GO:0019887">
    <property type="term" value="F:protein kinase regulator activity"/>
    <property type="evidence" value="ECO:0000318"/>
    <property type="project" value="GO_Central"/>
</dbReference>
<dbReference type="GO" id="GO:0000423">
    <property type="term" value="P:mitophagy"/>
    <property type="evidence" value="ECO:0000318"/>
    <property type="project" value="GO_Central"/>
</dbReference>
<dbReference type="GO" id="GO:0034727">
    <property type="term" value="P:piecemeal microautophagy of the nucleus"/>
    <property type="evidence" value="ECO:0000318"/>
    <property type="project" value="GO_Central"/>
</dbReference>
<dbReference type="GO" id="GO:0034497">
    <property type="term" value="P:protein localization to phagophore assembly site"/>
    <property type="evidence" value="ECO:0000318"/>
    <property type="project" value="GO_Central"/>
</dbReference>
<dbReference type="GO" id="GO:0015031">
    <property type="term" value="P:protein transport"/>
    <property type="evidence" value="ECO:0007669"/>
    <property type="project" value="UniProtKB-KW"/>
</dbReference>
<dbReference type="Gene3D" id="3.30.900.10">
    <property type="entry name" value="HORMA domain"/>
    <property type="match status" value="1"/>
</dbReference>
<dbReference type="InterPro" id="IPR040182">
    <property type="entry name" value="ATG13"/>
</dbReference>
<dbReference type="InterPro" id="IPR018731">
    <property type="entry name" value="Atg13_N"/>
</dbReference>
<dbReference type="InterPro" id="IPR036570">
    <property type="entry name" value="HORMA_dom_sf"/>
</dbReference>
<dbReference type="PANTHER" id="PTHR13430">
    <property type="match status" value="1"/>
</dbReference>
<dbReference type="PANTHER" id="PTHR13430:SF4">
    <property type="entry name" value="AUTOPHAGY-RELATED PROTEIN 13"/>
    <property type="match status" value="1"/>
</dbReference>
<dbReference type="Pfam" id="PF10033">
    <property type="entry name" value="ATG13"/>
    <property type="match status" value="1"/>
</dbReference>
<comment type="function">
    <text evidence="1">Activates the ATG1 kinase in a nutritional condition dependent manner through the TOR pathway, leading to autophagy. Also involved in cytoplasm to vacuole transport (Cvt) and more specifically in Cvt vesicle formation. Seems to play a role in the switching machinery regulating the conversion between the Cvt pathway and autophagy. Finally, ATG13 is also required for glycogen storage during stationary phase (By similarity).</text>
</comment>
<comment type="subunit">
    <text evidence="1">Interacts with ATG1 to form the ATG1-ATG13 kinase complex.</text>
</comment>
<comment type="subcellular location">
    <subcellularLocation>
        <location evidence="2">Cytoplasm</location>
    </subcellularLocation>
    <subcellularLocation>
        <location evidence="2">Preautophagosomal structure</location>
    </subcellularLocation>
</comment>
<comment type="similarity">
    <text evidence="4">Belongs to the ATG13 family. Fungi subfamily.</text>
</comment>
<protein>
    <recommendedName>
        <fullName>Autophagy-related protein 13</fullName>
    </recommendedName>
</protein>
<keyword id="KW-0072">Autophagy</keyword>
<keyword id="KW-0963">Cytoplasm</keyword>
<keyword id="KW-0653">Protein transport</keyword>
<keyword id="KW-1185">Reference proteome</keyword>
<keyword id="KW-0813">Transport</keyword>
<evidence type="ECO:0000250" key="1"/>
<evidence type="ECO:0000250" key="2">
    <source>
        <dbReference type="UniProtKB" id="Q06628"/>
    </source>
</evidence>
<evidence type="ECO:0000256" key="3">
    <source>
        <dbReference type="SAM" id="MobiDB-lite"/>
    </source>
</evidence>
<evidence type="ECO:0000305" key="4"/>
<name>ATG13_YARLI</name>
<reference key="1">
    <citation type="journal article" date="2004" name="Nature">
        <title>Genome evolution in yeasts.</title>
        <authorList>
            <person name="Dujon B."/>
            <person name="Sherman D."/>
            <person name="Fischer G."/>
            <person name="Durrens P."/>
            <person name="Casaregola S."/>
            <person name="Lafontaine I."/>
            <person name="de Montigny J."/>
            <person name="Marck C."/>
            <person name="Neuveglise C."/>
            <person name="Talla E."/>
            <person name="Goffard N."/>
            <person name="Frangeul L."/>
            <person name="Aigle M."/>
            <person name="Anthouard V."/>
            <person name="Babour A."/>
            <person name="Barbe V."/>
            <person name="Barnay S."/>
            <person name="Blanchin S."/>
            <person name="Beckerich J.-M."/>
            <person name="Beyne E."/>
            <person name="Bleykasten C."/>
            <person name="Boisrame A."/>
            <person name="Boyer J."/>
            <person name="Cattolico L."/>
            <person name="Confanioleri F."/>
            <person name="de Daruvar A."/>
            <person name="Despons L."/>
            <person name="Fabre E."/>
            <person name="Fairhead C."/>
            <person name="Ferry-Dumazet H."/>
            <person name="Groppi A."/>
            <person name="Hantraye F."/>
            <person name="Hennequin C."/>
            <person name="Jauniaux N."/>
            <person name="Joyet P."/>
            <person name="Kachouri R."/>
            <person name="Kerrest A."/>
            <person name="Koszul R."/>
            <person name="Lemaire M."/>
            <person name="Lesur I."/>
            <person name="Ma L."/>
            <person name="Muller H."/>
            <person name="Nicaud J.-M."/>
            <person name="Nikolski M."/>
            <person name="Oztas S."/>
            <person name="Ozier-Kalogeropoulos O."/>
            <person name="Pellenz S."/>
            <person name="Potier S."/>
            <person name="Richard G.-F."/>
            <person name="Straub M.-L."/>
            <person name="Suleau A."/>
            <person name="Swennen D."/>
            <person name="Tekaia F."/>
            <person name="Wesolowski-Louvel M."/>
            <person name="Westhof E."/>
            <person name="Wirth B."/>
            <person name="Zeniou-Meyer M."/>
            <person name="Zivanovic Y."/>
            <person name="Bolotin-Fukuhara M."/>
            <person name="Thierry A."/>
            <person name="Bouchier C."/>
            <person name="Caudron B."/>
            <person name="Scarpelli C."/>
            <person name="Gaillardin C."/>
            <person name="Weissenbach J."/>
            <person name="Wincker P."/>
            <person name="Souciet J.-L."/>
        </authorList>
    </citation>
    <scope>NUCLEOTIDE SEQUENCE [LARGE SCALE GENOMIC DNA]</scope>
    <source>
        <strain>CLIB 122 / E 150</strain>
    </source>
</reference>